<keyword id="KW-0004">4Fe-4S</keyword>
<keyword id="KW-0963">Cytoplasm</keyword>
<keyword id="KW-0408">Iron</keyword>
<keyword id="KW-0411">Iron-sulfur</keyword>
<keyword id="KW-0479">Metal-binding</keyword>
<keyword id="KW-0560">Oxidoreductase</keyword>
<keyword id="KW-0671">Queuosine biosynthesis</keyword>
<keyword id="KW-1185">Reference proteome</keyword>
<keyword id="KW-0819">tRNA processing</keyword>
<proteinExistence type="inferred from homology"/>
<accession>F9VEN7</accession>
<organism>
    <name type="scientific">Lactococcus garvieae (strain Lg2)</name>
    <name type="common">Enterococcus seriolicida</name>
    <dbReference type="NCBI Taxonomy" id="420890"/>
    <lineage>
        <taxon>Bacteria</taxon>
        <taxon>Bacillati</taxon>
        <taxon>Bacillota</taxon>
        <taxon>Bacilli</taxon>
        <taxon>Lactobacillales</taxon>
        <taxon>Streptococcaceae</taxon>
        <taxon>Lactococcus</taxon>
    </lineage>
</organism>
<name>QUEG_LACGL</name>
<evidence type="ECO:0000255" key="1">
    <source>
        <dbReference type="HAMAP-Rule" id="MF_00916"/>
    </source>
</evidence>
<evidence type="ECO:0000305" key="2"/>
<feature type="chain" id="PRO_0000416073" description="Epoxyqueuosine reductase">
    <location>
        <begin position="1"/>
        <end position="351"/>
    </location>
</feature>
<feature type="domain" description="4Fe-4S ferredoxin-type" evidence="1">
    <location>
        <begin position="177"/>
        <end position="205"/>
    </location>
</feature>
<feature type="active site" description="Proton donor" evidence="1">
    <location>
        <position position="131"/>
    </location>
</feature>
<feature type="binding site" evidence="1">
    <location>
        <position position="185"/>
    </location>
    <ligand>
        <name>[4Fe-4S] cluster</name>
        <dbReference type="ChEBI" id="CHEBI:49883"/>
        <label>1</label>
    </ligand>
</feature>
<feature type="binding site" evidence="1">
    <location>
        <position position="188"/>
    </location>
    <ligand>
        <name>[4Fe-4S] cluster</name>
        <dbReference type="ChEBI" id="CHEBI:49883"/>
        <label>1</label>
    </ligand>
</feature>
<feature type="binding site" evidence="1">
    <location>
        <position position="191"/>
    </location>
    <ligand>
        <name>[4Fe-4S] cluster</name>
        <dbReference type="ChEBI" id="CHEBI:49883"/>
        <label>1</label>
    </ligand>
</feature>
<feature type="binding site" evidence="1">
    <location>
        <position position="195"/>
    </location>
    <ligand>
        <name>[4Fe-4S] cluster</name>
        <dbReference type="ChEBI" id="CHEBI:49883"/>
        <label>2</label>
    </ligand>
</feature>
<feature type="binding site" evidence="1">
    <location>
        <position position="211"/>
    </location>
    <ligand>
        <name>[4Fe-4S] cluster</name>
        <dbReference type="ChEBI" id="CHEBI:49883"/>
        <label>2</label>
    </ligand>
</feature>
<feature type="binding site" evidence="1">
    <location>
        <position position="237"/>
    </location>
    <ligand>
        <name>[4Fe-4S] cluster</name>
        <dbReference type="ChEBI" id="CHEBI:49883"/>
        <label>2</label>
    </ligand>
</feature>
<feature type="binding site" evidence="1">
    <location>
        <position position="240"/>
    </location>
    <ligand>
        <name>[4Fe-4S] cluster</name>
        <dbReference type="ChEBI" id="CHEBI:49883"/>
        <label>2</label>
    </ligand>
</feature>
<feature type="binding site" evidence="1">
    <location>
        <position position="244"/>
    </location>
    <ligand>
        <name>[4Fe-4S] cluster</name>
        <dbReference type="ChEBI" id="CHEBI:49883"/>
        <label>1</label>
    </ligand>
</feature>
<protein>
    <recommendedName>
        <fullName evidence="1">Epoxyqueuosine reductase</fullName>
        <ecNumber evidence="1">1.17.99.6</ecNumber>
    </recommendedName>
    <alternativeName>
        <fullName evidence="1">Queuosine biosynthesis protein QueG</fullName>
    </alternativeName>
</protein>
<sequence>MKSLKEEIQKLAADLNIQKIGFTKADDFEYLRASLIEQKEAGHTSGFEHKNLDERLQPKLSLEDAKTIISIGIAYPNKAEEKPEKTEYRRGSFSRGSWGEDYHHVLRRKLKELAEGIEKIAGDFNYTAMVDTGALVDVAVAARAGLGFVGKNGLLVSKEYGSWMFLGELVTNLDIEEDQPVDYGCGSCTRCVDFCPTKALLGDGRLNAQRCLSYQTQTRGVMPEEYREKIKTVIYGCDICQVVCPYNKGINSHFHPEMEPDPDLTNPELLPLLDLSNKEFANKFGNMAGSWRGKNPIQRNVVYALGNANDRSALPKLHDIAENDVRDYMVDAAEWAIEKLENKHRMRPRKR</sequence>
<reference key="1">
    <citation type="journal article" date="2011" name="PLoS ONE">
        <title>Complete genome sequence and comparative analysis of the fish pathogen Lactococcus garvieae.</title>
        <authorList>
            <person name="Morita H."/>
            <person name="Toh H."/>
            <person name="Oshima K."/>
            <person name="Yoshizaki M."/>
            <person name="Kawanishi M."/>
            <person name="Nakaya K."/>
            <person name="Suzuki T."/>
            <person name="Miyauchi E."/>
            <person name="Ishii Y."/>
            <person name="Tanabe S."/>
            <person name="Murakami M."/>
            <person name="Hattori M."/>
        </authorList>
    </citation>
    <scope>NUCLEOTIDE SEQUENCE [LARGE SCALE GENOMIC DNA]</scope>
    <source>
        <strain>Lg2</strain>
    </source>
</reference>
<dbReference type="EC" id="1.17.99.6" evidence="1"/>
<dbReference type="EMBL" id="AP009333">
    <property type="protein sequence ID" value="BAK60788.1"/>
    <property type="status" value="ALT_INIT"/>
    <property type="molecule type" value="Genomic_DNA"/>
</dbReference>
<dbReference type="RefSeq" id="WP_016170890.1">
    <property type="nucleotide sequence ID" value="NC_017490.1"/>
</dbReference>
<dbReference type="SMR" id="F9VEN7"/>
<dbReference type="STRING" id="420890.LCGL_1328"/>
<dbReference type="KEGG" id="lgv:LCGL_1328"/>
<dbReference type="PATRIC" id="fig|420890.5.peg.1316"/>
<dbReference type="eggNOG" id="COG1600">
    <property type="taxonomic scope" value="Bacteria"/>
</dbReference>
<dbReference type="HOGENOM" id="CLU_030790_2_0_9"/>
<dbReference type="UniPathway" id="UPA00392"/>
<dbReference type="Proteomes" id="UP000008520">
    <property type="component" value="Chromosome"/>
</dbReference>
<dbReference type="GO" id="GO:0005737">
    <property type="term" value="C:cytoplasm"/>
    <property type="evidence" value="ECO:0007669"/>
    <property type="project" value="UniProtKB-SubCell"/>
</dbReference>
<dbReference type="GO" id="GO:0051539">
    <property type="term" value="F:4 iron, 4 sulfur cluster binding"/>
    <property type="evidence" value="ECO:0007669"/>
    <property type="project" value="UniProtKB-KW"/>
</dbReference>
<dbReference type="GO" id="GO:0052693">
    <property type="term" value="F:epoxyqueuosine reductase activity"/>
    <property type="evidence" value="ECO:0007669"/>
    <property type="project" value="UniProtKB-UniRule"/>
</dbReference>
<dbReference type="GO" id="GO:0046872">
    <property type="term" value="F:metal ion binding"/>
    <property type="evidence" value="ECO:0007669"/>
    <property type="project" value="UniProtKB-KW"/>
</dbReference>
<dbReference type="GO" id="GO:0008616">
    <property type="term" value="P:queuosine biosynthetic process"/>
    <property type="evidence" value="ECO:0007669"/>
    <property type="project" value="UniProtKB-UniRule"/>
</dbReference>
<dbReference type="GO" id="GO:0006400">
    <property type="term" value="P:tRNA modification"/>
    <property type="evidence" value="ECO:0007669"/>
    <property type="project" value="UniProtKB-UniRule"/>
</dbReference>
<dbReference type="HAMAP" id="MF_00916">
    <property type="entry name" value="QueG"/>
    <property type="match status" value="1"/>
</dbReference>
<dbReference type="InterPro" id="IPR017896">
    <property type="entry name" value="4Fe4S_Fe-S-bd"/>
</dbReference>
<dbReference type="InterPro" id="IPR017900">
    <property type="entry name" value="4Fe4S_Fe_S_CS"/>
</dbReference>
<dbReference type="InterPro" id="IPR004453">
    <property type="entry name" value="QueG"/>
</dbReference>
<dbReference type="InterPro" id="IPR013542">
    <property type="entry name" value="QueG_DUF1730"/>
</dbReference>
<dbReference type="NCBIfam" id="TIGR00276">
    <property type="entry name" value="tRNA epoxyqueuosine(34) reductase QueG"/>
    <property type="match status" value="1"/>
</dbReference>
<dbReference type="PANTHER" id="PTHR30002">
    <property type="entry name" value="EPOXYQUEUOSINE REDUCTASE"/>
    <property type="match status" value="1"/>
</dbReference>
<dbReference type="PANTHER" id="PTHR30002:SF4">
    <property type="entry name" value="EPOXYQUEUOSINE REDUCTASE"/>
    <property type="match status" value="1"/>
</dbReference>
<dbReference type="Pfam" id="PF13484">
    <property type="entry name" value="Fer4_16"/>
    <property type="match status" value="1"/>
</dbReference>
<dbReference type="Pfam" id="PF08331">
    <property type="entry name" value="QueG_DUF1730"/>
    <property type="match status" value="1"/>
</dbReference>
<dbReference type="SUPFAM" id="SSF46548">
    <property type="entry name" value="alpha-helical ferredoxin"/>
    <property type="match status" value="1"/>
</dbReference>
<dbReference type="PROSITE" id="PS00198">
    <property type="entry name" value="4FE4S_FER_1"/>
    <property type="match status" value="1"/>
</dbReference>
<dbReference type="PROSITE" id="PS51379">
    <property type="entry name" value="4FE4S_FER_2"/>
    <property type="match status" value="1"/>
</dbReference>
<comment type="function">
    <text evidence="1">Catalyzes the conversion of epoxyqueuosine (oQ) to queuosine (Q), which is a hypermodified base found in the wobble positions of tRNA(Asp), tRNA(Asn), tRNA(His) and tRNA(Tyr).</text>
</comment>
<comment type="catalytic activity">
    <reaction evidence="1">
        <text>epoxyqueuosine(34) in tRNA + AH2 = queuosine(34) in tRNA + A + H2O</text>
        <dbReference type="Rhea" id="RHEA:32159"/>
        <dbReference type="Rhea" id="RHEA-COMP:18571"/>
        <dbReference type="Rhea" id="RHEA-COMP:18582"/>
        <dbReference type="ChEBI" id="CHEBI:13193"/>
        <dbReference type="ChEBI" id="CHEBI:15377"/>
        <dbReference type="ChEBI" id="CHEBI:17499"/>
        <dbReference type="ChEBI" id="CHEBI:194431"/>
        <dbReference type="ChEBI" id="CHEBI:194443"/>
        <dbReference type="EC" id="1.17.99.6"/>
    </reaction>
</comment>
<comment type="cofactor">
    <cofactor evidence="1">
        <name>cob(II)alamin</name>
        <dbReference type="ChEBI" id="CHEBI:16304"/>
    </cofactor>
</comment>
<comment type="cofactor">
    <cofactor evidence="1">
        <name>[4Fe-4S] cluster</name>
        <dbReference type="ChEBI" id="CHEBI:49883"/>
    </cofactor>
    <text evidence="1">Binds 2 [4Fe-4S] clusters per monomer.</text>
</comment>
<comment type="pathway">
    <text evidence="1">tRNA modification; tRNA-queuosine biosynthesis.</text>
</comment>
<comment type="subunit">
    <text evidence="1">Monomer.</text>
</comment>
<comment type="subcellular location">
    <subcellularLocation>
        <location evidence="1">Cytoplasm</location>
    </subcellularLocation>
</comment>
<comment type="similarity">
    <text evidence="1">Belongs to the QueG family.</text>
</comment>
<comment type="sequence caution" evidence="2">
    <conflict type="erroneous initiation">
        <sequence resource="EMBL-CDS" id="BAK60788"/>
    </conflict>
    <text>Truncated N-terminus.</text>
</comment>
<gene>
    <name evidence="1" type="primary">queG</name>
    <name type="ordered locus">LCGL_1328</name>
</gene>